<feature type="chain" id="PRO_0000216225" description="Uncharacterized protein SSO2105">
    <location>
        <begin position="1"/>
        <end position="369"/>
    </location>
</feature>
<comment type="similarity">
    <text evidence="1">To A.pernix APE1276 and APE1804.</text>
</comment>
<proteinExistence type="predicted"/>
<dbReference type="EMBL" id="Y08256">
    <property type="protein sequence ID" value="CAA69477.1"/>
    <property type="molecule type" value="Genomic_DNA"/>
</dbReference>
<dbReference type="EMBL" id="AE006641">
    <property type="protein sequence ID" value="AAK42284.1"/>
    <property type="molecule type" value="Genomic_DNA"/>
</dbReference>
<dbReference type="PIR" id="S74017">
    <property type="entry name" value="S74017"/>
</dbReference>
<dbReference type="SMR" id="P95879"/>
<dbReference type="STRING" id="273057.SSO2105"/>
<dbReference type="PaxDb" id="273057-SSO2105"/>
<dbReference type="EnsemblBacteria" id="AAK42284">
    <property type="protein sequence ID" value="AAK42284"/>
    <property type="gene ID" value="SSO2105"/>
</dbReference>
<dbReference type="KEGG" id="sso:SSO2105"/>
<dbReference type="PATRIC" id="fig|273057.12.peg.2191"/>
<dbReference type="eggNOG" id="arCOG04197">
    <property type="taxonomic scope" value="Archaea"/>
</dbReference>
<dbReference type="HOGENOM" id="CLU_064882_1_0_2"/>
<dbReference type="InParanoid" id="P95879"/>
<dbReference type="Proteomes" id="UP000001974">
    <property type="component" value="Chromosome"/>
</dbReference>
<dbReference type="InterPro" id="IPR010094">
    <property type="entry name" value="Transposase_put_N"/>
</dbReference>
<dbReference type="NCBIfam" id="TIGR01765">
    <property type="entry name" value="tspaseT_teng_N"/>
    <property type="match status" value="1"/>
</dbReference>
<keyword id="KW-1185">Reference proteome</keyword>
<reference key="1">
    <citation type="journal article" date="1996" name="Mol. Microbiol.">
        <title>Organizational characteristics and information content of an archaeal genome: 156 kb of sequence from Sulfolobus solfataricus P2.</title>
        <authorList>
            <person name="Sensen C.W."/>
            <person name="Klenk H.-P."/>
            <person name="Singh R.K."/>
            <person name="Allard G."/>
            <person name="Chan C.C.-Y."/>
            <person name="Liu Q.Y."/>
            <person name="Penny S.L."/>
            <person name="Young F."/>
            <person name="Schenk M.E."/>
            <person name="Gaasterland T."/>
            <person name="Doolittle W.F."/>
            <person name="Ragan M.A."/>
            <person name="Charlebois R.L."/>
        </authorList>
    </citation>
    <scope>NUCLEOTIDE SEQUENCE [GENOMIC DNA]</scope>
    <source>
        <strain>ATCC 35092 / DSM 1617 / JCM 11322 / P2</strain>
    </source>
</reference>
<reference key="2">
    <citation type="journal article" date="2001" name="Proc. Natl. Acad. Sci. U.S.A.">
        <title>The complete genome of the crenarchaeon Sulfolobus solfataricus P2.</title>
        <authorList>
            <person name="She Q."/>
            <person name="Singh R.K."/>
            <person name="Confalonieri F."/>
            <person name="Zivanovic Y."/>
            <person name="Allard G."/>
            <person name="Awayez M.J."/>
            <person name="Chan-Weiher C.C.-Y."/>
            <person name="Clausen I.G."/>
            <person name="Curtis B.A."/>
            <person name="De Moors A."/>
            <person name="Erauso G."/>
            <person name="Fletcher C."/>
            <person name="Gordon P.M.K."/>
            <person name="Heikamp-de Jong I."/>
            <person name="Jeffries A.C."/>
            <person name="Kozera C.J."/>
            <person name="Medina N."/>
            <person name="Peng X."/>
            <person name="Thi-Ngoc H.P."/>
            <person name="Redder P."/>
            <person name="Schenk M.E."/>
            <person name="Theriault C."/>
            <person name="Tolstrup N."/>
            <person name="Charlebois R.L."/>
            <person name="Doolittle W.F."/>
            <person name="Duguet M."/>
            <person name="Gaasterland T."/>
            <person name="Garrett R.A."/>
            <person name="Ragan M.A."/>
            <person name="Sensen C.W."/>
            <person name="Van der Oost J."/>
        </authorList>
    </citation>
    <scope>NUCLEOTIDE SEQUENCE [LARGE SCALE GENOMIC DNA]</scope>
    <source>
        <strain>ATCC 35092 / DSM 1617 / JCM 11322 / P2</strain>
    </source>
</reference>
<gene>
    <name type="ordered locus">SSO2105</name>
    <name type="ORF">C06032</name>
    <name type="ORF">C06_015</name>
</gene>
<name>Y2105_SACS2</name>
<sequence>MLSYQMMRSKLIGSKEALDNFQFVTINGKVIFNEKDKVVRIARVYSQVVKSAIKPLFDGKSVDELTKEFYNVLPNYVYLETALKQAKTIVEGLLEREEERGEIIHARIRKFWFGSRGNKSDRGNRNMKFRVLEDRVLIKVRDPWNKEWIFGKAYFGKEYLPLLKELEDLAQRKEEGYGALVSFKEKSMIHLQIPLWLYLKHFSLPKPTGYGLIAGFDLNSDRLNVVVINKDGKVITTRTFWYSDVTRPGFPKVKARALRLNALSNSLEFLSRIGVDYVVFEDLFLVKRRKFIKSKSGNRKISKFAKKQLLIHGVIKSLRFGFNVVLVNPKGTTNSGEHDRVMREKGFDKHTASAYLIALKGLGMLNDIK</sequence>
<protein>
    <recommendedName>
        <fullName>Uncharacterized protein SSO2105</fullName>
    </recommendedName>
</protein>
<organism>
    <name type="scientific">Saccharolobus solfataricus (strain ATCC 35092 / DSM 1617 / JCM 11322 / P2)</name>
    <name type="common">Sulfolobus solfataricus</name>
    <dbReference type="NCBI Taxonomy" id="273057"/>
    <lineage>
        <taxon>Archaea</taxon>
        <taxon>Thermoproteota</taxon>
        <taxon>Thermoprotei</taxon>
        <taxon>Sulfolobales</taxon>
        <taxon>Sulfolobaceae</taxon>
        <taxon>Saccharolobus</taxon>
    </lineage>
</organism>
<evidence type="ECO:0000305" key="1"/>
<accession>P95879</accession>